<reference key="1">
    <citation type="journal article" date="2007" name="Appl. Environ. Microbiol.">
        <title>Genome sequence of the cellulolytic gliding bacterium Cytophaga hutchinsonii.</title>
        <authorList>
            <person name="Xie G."/>
            <person name="Bruce D.C."/>
            <person name="Challacombe J.F."/>
            <person name="Chertkov O."/>
            <person name="Detter J.C."/>
            <person name="Gilna P."/>
            <person name="Han C.S."/>
            <person name="Lucas S."/>
            <person name="Misra M."/>
            <person name="Myers G.L."/>
            <person name="Richardson P."/>
            <person name="Tapia R."/>
            <person name="Thayer N."/>
            <person name="Thompson L.S."/>
            <person name="Brettin T.S."/>
            <person name="Henrissat B."/>
            <person name="Wilson D.B."/>
            <person name="McBride M.J."/>
        </authorList>
    </citation>
    <scope>NUCLEOTIDE SEQUENCE [LARGE SCALE GENOMIC DNA]</scope>
    <source>
        <strain>ATCC 33406 / DSM 1761 / JCM 20678 / CIP 103989 / IAM 12607 / NBRC 15051 / NCIMB 9469 / D465</strain>
    </source>
</reference>
<sequence>MGFFSGEYDCTVDAKGRMVLPARIKSNLPDIDAGNVVLTRGFESCIVLYSQTEFKKIYSKVSGLNEFSEEYRVFQRNFFRGINEVELDSNGRLLIPKMLMAHAQLEKDITVVGMGNRVEIWSPDLYQKFLIQDSSEFAQLAEKYLAPTKKE</sequence>
<protein>
    <recommendedName>
        <fullName>Transcriptional regulator MraZ</fullName>
    </recommendedName>
</protein>
<dbReference type="EMBL" id="CP000383">
    <property type="protein sequence ID" value="ABG59999.1"/>
    <property type="molecule type" value="Genomic_DNA"/>
</dbReference>
<dbReference type="RefSeq" id="WP_011586109.1">
    <property type="nucleotide sequence ID" value="NC_008255.1"/>
</dbReference>
<dbReference type="SMR" id="Q11RG5"/>
<dbReference type="STRING" id="269798.CHU_2749"/>
<dbReference type="KEGG" id="chu:CHU_2749"/>
<dbReference type="eggNOG" id="COG2001">
    <property type="taxonomic scope" value="Bacteria"/>
</dbReference>
<dbReference type="HOGENOM" id="CLU_107907_0_4_10"/>
<dbReference type="OrthoDB" id="9807753at2"/>
<dbReference type="Proteomes" id="UP000001822">
    <property type="component" value="Chromosome"/>
</dbReference>
<dbReference type="GO" id="GO:0005737">
    <property type="term" value="C:cytoplasm"/>
    <property type="evidence" value="ECO:0007669"/>
    <property type="project" value="UniProtKB-UniRule"/>
</dbReference>
<dbReference type="GO" id="GO:0009295">
    <property type="term" value="C:nucleoid"/>
    <property type="evidence" value="ECO:0007669"/>
    <property type="project" value="UniProtKB-SubCell"/>
</dbReference>
<dbReference type="GO" id="GO:0003700">
    <property type="term" value="F:DNA-binding transcription factor activity"/>
    <property type="evidence" value="ECO:0007669"/>
    <property type="project" value="UniProtKB-UniRule"/>
</dbReference>
<dbReference type="GO" id="GO:0000976">
    <property type="term" value="F:transcription cis-regulatory region binding"/>
    <property type="evidence" value="ECO:0007669"/>
    <property type="project" value="TreeGrafter"/>
</dbReference>
<dbReference type="GO" id="GO:2000143">
    <property type="term" value="P:negative regulation of DNA-templated transcription initiation"/>
    <property type="evidence" value="ECO:0007669"/>
    <property type="project" value="TreeGrafter"/>
</dbReference>
<dbReference type="CDD" id="cd16321">
    <property type="entry name" value="MraZ_C"/>
    <property type="match status" value="1"/>
</dbReference>
<dbReference type="CDD" id="cd16320">
    <property type="entry name" value="MraZ_N"/>
    <property type="match status" value="1"/>
</dbReference>
<dbReference type="Gene3D" id="3.40.1550.20">
    <property type="entry name" value="Transcriptional regulator MraZ domain"/>
    <property type="match status" value="1"/>
</dbReference>
<dbReference type="HAMAP" id="MF_01008">
    <property type="entry name" value="MraZ"/>
    <property type="match status" value="1"/>
</dbReference>
<dbReference type="InterPro" id="IPR003444">
    <property type="entry name" value="MraZ"/>
</dbReference>
<dbReference type="InterPro" id="IPR035644">
    <property type="entry name" value="MraZ_C"/>
</dbReference>
<dbReference type="InterPro" id="IPR020603">
    <property type="entry name" value="MraZ_dom"/>
</dbReference>
<dbReference type="InterPro" id="IPR035642">
    <property type="entry name" value="MraZ_N"/>
</dbReference>
<dbReference type="InterPro" id="IPR038619">
    <property type="entry name" value="MraZ_sf"/>
</dbReference>
<dbReference type="InterPro" id="IPR007159">
    <property type="entry name" value="SpoVT-AbrB_dom"/>
</dbReference>
<dbReference type="InterPro" id="IPR037914">
    <property type="entry name" value="SpoVT-AbrB_sf"/>
</dbReference>
<dbReference type="NCBIfam" id="TIGR00242">
    <property type="entry name" value="division/cell wall cluster transcriptional repressor MraZ"/>
    <property type="match status" value="1"/>
</dbReference>
<dbReference type="PANTHER" id="PTHR34701">
    <property type="entry name" value="TRANSCRIPTIONAL REGULATOR MRAZ"/>
    <property type="match status" value="1"/>
</dbReference>
<dbReference type="PANTHER" id="PTHR34701:SF1">
    <property type="entry name" value="TRANSCRIPTIONAL REGULATOR MRAZ"/>
    <property type="match status" value="1"/>
</dbReference>
<dbReference type="Pfam" id="PF02381">
    <property type="entry name" value="MraZ"/>
    <property type="match status" value="2"/>
</dbReference>
<dbReference type="SUPFAM" id="SSF89447">
    <property type="entry name" value="AbrB/MazE/MraZ-like"/>
    <property type="match status" value="1"/>
</dbReference>
<dbReference type="PROSITE" id="PS51740">
    <property type="entry name" value="SPOVT_ABRB"/>
    <property type="match status" value="2"/>
</dbReference>
<evidence type="ECO:0000255" key="1">
    <source>
        <dbReference type="HAMAP-Rule" id="MF_01008"/>
    </source>
</evidence>
<evidence type="ECO:0000255" key="2">
    <source>
        <dbReference type="PROSITE-ProRule" id="PRU01076"/>
    </source>
</evidence>
<keyword id="KW-0963">Cytoplasm</keyword>
<keyword id="KW-0238">DNA-binding</keyword>
<keyword id="KW-1185">Reference proteome</keyword>
<keyword id="KW-0677">Repeat</keyword>
<keyword id="KW-0804">Transcription</keyword>
<keyword id="KW-0805">Transcription regulation</keyword>
<organism>
    <name type="scientific">Cytophaga hutchinsonii (strain ATCC 33406 / DSM 1761 / CIP 103989 / NBRC 15051 / NCIMB 9469 / D465)</name>
    <dbReference type="NCBI Taxonomy" id="269798"/>
    <lineage>
        <taxon>Bacteria</taxon>
        <taxon>Pseudomonadati</taxon>
        <taxon>Bacteroidota</taxon>
        <taxon>Cytophagia</taxon>
        <taxon>Cytophagales</taxon>
        <taxon>Cytophagaceae</taxon>
        <taxon>Cytophaga</taxon>
    </lineage>
</organism>
<feature type="chain" id="PRO_1000062867" description="Transcriptional regulator MraZ">
    <location>
        <begin position="1"/>
        <end position="151"/>
    </location>
</feature>
<feature type="domain" description="SpoVT-AbrB 1" evidence="2">
    <location>
        <begin position="7"/>
        <end position="53"/>
    </location>
</feature>
<feature type="domain" description="SpoVT-AbrB 2" evidence="2">
    <location>
        <begin position="82"/>
        <end position="125"/>
    </location>
</feature>
<accession>Q11RG5</accession>
<name>MRAZ_CYTH3</name>
<gene>
    <name evidence="1" type="primary">mraZ</name>
    <name type="ordered locus">CHU_2749</name>
</gene>
<comment type="subunit">
    <text evidence="1">Forms oligomers.</text>
</comment>
<comment type="subcellular location">
    <subcellularLocation>
        <location evidence="1">Cytoplasm</location>
        <location evidence="1">Nucleoid</location>
    </subcellularLocation>
</comment>
<comment type="similarity">
    <text evidence="1">Belongs to the MraZ family.</text>
</comment>
<proteinExistence type="inferred from homology"/>